<organism>
    <name type="scientific">Escherichia coli (strain K12 / MC4100 / BW2952)</name>
    <dbReference type="NCBI Taxonomy" id="595496"/>
    <lineage>
        <taxon>Bacteria</taxon>
        <taxon>Pseudomonadati</taxon>
        <taxon>Pseudomonadota</taxon>
        <taxon>Gammaproteobacteria</taxon>
        <taxon>Enterobacterales</taxon>
        <taxon>Enterobacteriaceae</taxon>
        <taxon>Escherichia</taxon>
    </lineage>
</organism>
<accession>C4ZRL2</accession>
<dbReference type="EMBL" id="CP001396">
    <property type="protein sequence ID" value="ACR62424.1"/>
    <property type="molecule type" value="Genomic_DNA"/>
</dbReference>
<dbReference type="RefSeq" id="WP_000384306.1">
    <property type="nucleotide sequence ID" value="NC_012759.1"/>
</dbReference>
<dbReference type="GeneID" id="93777317"/>
<dbReference type="KEGG" id="ebw:BWG_0112"/>
<dbReference type="HOGENOM" id="CLU_139226_0_0_6"/>
<dbReference type="HAMAP" id="MF_01053">
    <property type="entry name" value="UPF0231"/>
    <property type="match status" value="1"/>
</dbReference>
<dbReference type="InterPro" id="IPR008249">
    <property type="entry name" value="UPF0231"/>
</dbReference>
<dbReference type="NCBIfam" id="NF003574">
    <property type="entry name" value="PRK05248.1-1"/>
    <property type="match status" value="1"/>
</dbReference>
<dbReference type="NCBIfam" id="NF003576">
    <property type="entry name" value="PRK05248.1-3"/>
    <property type="match status" value="1"/>
</dbReference>
<dbReference type="Pfam" id="PF06062">
    <property type="entry name" value="UPF0231"/>
    <property type="match status" value="1"/>
</dbReference>
<dbReference type="PIRSF" id="PIRSF006287">
    <property type="entry name" value="UCP006287"/>
    <property type="match status" value="1"/>
</dbReference>
<gene>
    <name evidence="1" type="primary">yacL</name>
    <name type="ordered locus">BWG_0112</name>
</gene>
<reference key="1">
    <citation type="journal article" date="2009" name="J. Bacteriol.">
        <title>Genomic sequencing reveals regulatory mutations and recombinational events in the widely used MC4100 lineage of Escherichia coli K-12.</title>
        <authorList>
            <person name="Ferenci T."/>
            <person name="Zhou Z."/>
            <person name="Betteridge T."/>
            <person name="Ren Y."/>
            <person name="Liu Y."/>
            <person name="Feng L."/>
            <person name="Reeves P.R."/>
            <person name="Wang L."/>
        </authorList>
    </citation>
    <scope>NUCLEOTIDE SEQUENCE [LARGE SCALE GENOMIC DNA]</scope>
    <source>
        <strain>K12 / MC4100 / BW2952</strain>
    </source>
</reference>
<protein>
    <recommendedName>
        <fullName evidence="1">UPF0231 protein YacL</fullName>
    </recommendedName>
</protein>
<comment type="similarity">
    <text evidence="1">Belongs to the UPF0231 family.</text>
</comment>
<feature type="chain" id="PRO_1000213432" description="UPF0231 protein YacL">
    <location>
        <begin position="1"/>
        <end position="120"/>
    </location>
</feature>
<proteinExistence type="inferred from homology"/>
<evidence type="ECO:0000255" key="1">
    <source>
        <dbReference type="HAMAP-Rule" id="MF_01053"/>
    </source>
</evidence>
<sequence length="120" mass="13942">MDYEFLRDITGVVKVRMSMGHEVVGHWFNEEVKENLALLDEVEQAAHALKGSERSWQRAGHEYTLWMDGEEVMVRANQLEFAGDEMEEGMNYYDEESLSLCGVEDFLQVVAAYRNFVQQK</sequence>
<name>YACL_ECOBW</name>